<comment type="subcellular location">
    <subcellularLocation>
        <location evidence="1">Host cytoplasm</location>
    </subcellularLocation>
    <subcellularLocation>
        <location evidence="1">Virion</location>
    </subcellularLocation>
</comment>
<comment type="similarity">
    <text evidence="2">Belongs to the ovine/caprine lentivirus group Vif protein family.</text>
</comment>
<comment type="sequence caution" evidence="2">
    <conflict type="erroneous initiation">
        <sequence resource="EMBL-CDS" id="AAA17525"/>
    </conflict>
</comment>
<proteinExistence type="inferred from homology"/>
<keyword id="KW-1035">Host cytoplasm</keyword>
<keyword id="KW-0946">Virion</keyword>
<accession>P23430</accession>
<name>VIF_VILV1</name>
<reference key="1">
    <citation type="journal article" date="1991" name="Virology">
        <title>Isolation of replication-competent molecular clones of visna virus.</title>
        <authorList>
            <person name="Staskus K.A."/>
            <person name="Retzel E.F."/>
            <person name="Lewis E.D."/>
            <person name="Wietgrefe S.W."/>
            <person name="Silsby J.L."/>
            <person name="Cyr S."/>
            <person name="Rank J.M."/>
            <person name="Haase A.T."/>
            <person name="Fast D."/>
            <person name="Geiser P.T."/>
            <person name="Harty J.T."/>
            <person name="Kong S.H."/>
            <person name="Cook R."/>
            <person name="Lahti C.J."/>
            <person name="Neufeld T.P."/>
            <person name="Porter T.E."/>
            <person name="Shoop E."/>
            <person name="Zachow K.R."/>
        </authorList>
    </citation>
    <scope>NUCLEOTIDE SEQUENCE</scope>
</reference>
<protein>
    <recommendedName>
        <fullName>Virion infectivity factor</fullName>
    </recommendedName>
    <alternativeName>
        <fullName>Q protein</fullName>
    </alternativeName>
</protein>
<organismHost>
    <name type="scientific">Ovis aries</name>
    <name type="common">Sheep</name>
    <dbReference type="NCBI Taxonomy" id="9940"/>
</organismHost>
<gene>
    <name type="primary">vif</name>
</gene>
<evidence type="ECO:0000250" key="1"/>
<evidence type="ECO:0000305" key="2"/>
<dbReference type="EMBL" id="M60609">
    <property type="protein sequence ID" value="AAA17525.1"/>
    <property type="status" value="ALT_INIT"/>
    <property type="molecule type" value="Unassigned_RNA"/>
</dbReference>
<dbReference type="SMR" id="P23430"/>
<dbReference type="GO" id="GO:0030430">
    <property type="term" value="C:host cell cytoplasm"/>
    <property type="evidence" value="ECO:0007669"/>
    <property type="project" value="UniProtKB-SubCell"/>
</dbReference>
<dbReference type="GO" id="GO:0044423">
    <property type="term" value="C:virion component"/>
    <property type="evidence" value="ECO:0007669"/>
    <property type="project" value="UniProtKB-KW"/>
</dbReference>
<dbReference type="InterPro" id="IPR009979">
    <property type="entry name" value="Lenti_VIF_2"/>
</dbReference>
<dbReference type="Pfam" id="PF07401">
    <property type="entry name" value="Lenti_VIF_2"/>
    <property type="match status" value="1"/>
</dbReference>
<sequence>MLSSYRHQKKYKKNKAREIGPQLPLWAWKETAFSINQEPYWYSTIRLQGLMWNKRGHKLMFVKENQGYEYWETSGKQWKMEVRRDLDLIAQINFRNAWQYKSQGEWKTIGVWYESPGDYKGKENQFWFHWRIALCSCNKTGWDIREFMIGKHRWDLCKSCIQGEIVKNTNPRSLQRLALLHLAKDHVFQVMPLWRARRVTVQKFSWCRSPMGYTIPWSLQECWEMESIFE</sequence>
<organism>
    <name type="scientific">Maedi visna virus (strain 1514 / clone LV1-1KS1)</name>
    <name type="common">MVV</name>
    <name type="synonym">Visna lentivirus</name>
    <dbReference type="NCBI Taxonomy" id="11743"/>
    <lineage>
        <taxon>Viruses</taxon>
        <taxon>Riboviria</taxon>
        <taxon>Pararnavirae</taxon>
        <taxon>Artverviricota</taxon>
        <taxon>Revtraviricetes</taxon>
        <taxon>Ortervirales</taxon>
        <taxon>Retroviridae</taxon>
        <taxon>Orthoretrovirinae</taxon>
        <taxon>Lentivirus</taxon>
        <taxon>Visna-maedi virus</taxon>
    </lineage>
</organism>
<feature type="chain" id="PRO_0000085505" description="Virion infectivity factor">
    <location>
        <begin position="1"/>
        <end position="230"/>
    </location>
</feature>